<comment type="function">
    <text evidence="1">Catalyzes the condensation of two molecules of acetyl-CoA to produce acetoacetyl-CoA.</text>
</comment>
<comment type="catalytic activity">
    <reaction evidence="1">
        <text>2 acetyl-CoA = acetoacetyl-CoA + CoA</text>
        <dbReference type="Rhea" id="RHEA:21036"/>
        <dbReference type="ChEBI" id="CHEBI:57286"/>
        <dbReference type="ChEBI" id="CHEBI:57287"/>
        <dbReference type="ChEBI" id="CHEBI:57288"/>
        <dbReference type="EC" id="2.3.1.9"/>
    </reaction>
</comment>
<comment type="subunit">
    <text evidence="1">Homotetramer.</text>
</comment>
<comment type="subcellular location">
    <subcellularLocation>
        <location evidence="1">Cytoplasm</location>
    </subcellularLocation>
</comment>
<comment type="similarity">
    <text evidence="2">Belongs to the thiolase-like superfamily. Thiolase family.</text>
</comment>
<keyword id="KW-0012">Acyltransferase</keyword>
<keyword id="KW-0963">Cytoplasm</keyword>
<keyword id="KW-0903">Direct protein sequencing</keyword>
<keyword id="KW-0808">Transferase</keyword>
<dbReference type="EC" id="2.3.1.9" evidence="1"/>
<dbReference type="GO" id="GO:0005737">
    <property type="term" value="C:cytoplasm"/>
    <property type="evidence" value="ECO:0007669"/>
    <property type="project" value="UniProtKB-SubCell"/>
</dbReference>
<dbReference type="GO" id="GO:0003985">
    <property type="term" value="F:acetyl-CoA C-acetyltransferase activity"/>
    <property type="evidence" value="ECO:0007669"/>
    <property type="project" value="UniProtKB-EC"/>
</dbReference>
<accession>P81347</accession>
<proteinExistence type="evidence at protein level"/>
<reference key="1">
    <citation type="journal article" date="1998" name="Electrophoresis">
        <title>Two-dimensional gel electrophoresis separation and N-terminal sequence analysis of proteins from Clostridium pasteurianum W5.</title>
        <authorList>
            <person name="Flengsrud R."/>
            <person name="Skjeldal L."/>
        </authorList>
    </citation>
    <scope>PROTEIN SEQUENCE</scope>
    <source>
        <strain>ATCC 6013 / DSM 525 / NCIB 9486 / VKM B-1774 / W5</strain>
    </source>
</reference>
<protein>
    <recommendedName>
        <fullName evidence="1">Acetyl-CoA acetyltransferase</fullName>
        <ecNumber evidence="1">2.3.1.9</ecNumber>
    </recommendedName>
    <alternativeName>
        <fullName evidence="1">Acetoacetyl-CoA thiolase</fullName>
    </alternativeName>
    <alternativeName>
        <fullName>CP 13</fullName>
    </alternativeName>
</protein>
<gene>
    <name type="primary">thl</name>
</gene>
<organism>
    <name type="scientific">Clostridium pasteurianum</name>
    <dbReference type="NCBI Taxonomy" id="1501"/>
    <lineage>
        <taxon>Bacteria</taxon>
        <taxon>Bacillati</taxon>
        <taxon>Bacillota</taxon>
        <taxon>Clostridia</taxon>
        <taxon>Eubacteriales</taxon>
        <taxon>Clostridiaceae</taxon>
        <taxon>Clostridium</taxon>
    </lineage>
</organism>
<sequence length="15" mass="1498">MKEVVIASAVXTAXG</sequence>
<evidence type="ECO:0000250" key="1">
    <source>
        <dbReference type="UniProtKB" id="P45359"/>
    </source>
</evidence>
<evidence type="ECO:0000305" key="2"/>
<name>THLA_CLOPA</name>
<feature type="chain" id="PRO_0000206405" description="Acetyl-CoA acetyltransferase">
    <location>
        <begin position="1"/>
        <end position="15" status="greater than"/>
    </location>
</feature>
<feature type="non-terminal residue">
    <location>
        <position position="15"/>
    </location>
</feature>